<proteinExistence type="inferred from homology"/>
<gene>
    <name type="primary">STU1</name>
    <name type="ORF">UMAG_11759</name>
</gene>
<organism>
    <name type="scientific">Mycosarcoma maydis</name>
    <name type="common">Corn smut fungus</name>
    <name type="synonym">Ustilago maydis</name>
    <dbReference type="NCBI Taxonomy" id="5270"/>
    <lineage>
        <taxon>Eukaryota</taxon>
        <taxon>Fungi</taxon>
        <taxon>Dikarya</taxon>
        <taxon>Basidiomycota</taxon>
        <taxon>Ustilaginomycotina</taxon>
        <taxon>Ustilaginomycetes</taxon>
        <taxon>Ustilaginales</taxon>
        <taxon>Ustilaginaceae</taxon>
        <taxon>Mycosarcoma</taxon>
    </lineage>
</organism>
<feature type="chain" id="PRO_0000272295" description="Protein STU1">
    <location>
        <begin position="1"/>
        <end position="1296"/>
    </location>
</feature>
<feature type="region of interest" description="Disordered" evidence="2">
    <location>
        <begin position="258"/>
        <end position="287"/>
    </location>
</feature>
<feature type="region of interest" description="Disordered" evidence="2">
    <location>
        <begin position="735"/>
        <end position="793"/>
    </location>
</feature>
<feature type="region of interest" description="Disordered" evidence="2">
    <location>
        <begin position="888"/>
        <end position="946"/>
    </location>
</feature>
<feature type="region of interest" description="Disordered" evidence="2">
    <location>
        <begin position="953"/>
        <end position="972"/>
    </location>
</feature>
<feature type="compositionally biased region" description="Polar residues" evidence="2">
    <location>
        <begin position="277"/>
        <end position="287"/>
    </location>
</feature>
<feature type="compositionally biased region" description="Low complexity" evidence="2">
    <location>
        <begin position="755"/>
        <end position="782"/>
    </location>
</feature>
<feature type="compositionally biased region" description="Low complexity" evidence="2">
    <location>
        <begin position="900"/>
        <end position="919"/>
    </location>
</feature>
<feature type="compositionally biased region" description="Low complexity" evidence="2">
    <location>
        <begin position="933"/>
        <end position="946"/>
    </location>
</feature>
<feature type="compositionally biased region" description="Polar residues" evidence="2">
    <location>
        <begin position="953"/>
        <end position="964"/>
    </location>
</feature>
<keyword id="KW-0131">Cell cycle</keyword>
<keyword id="KW-0132">Cell division</keyword>
<keyword id="KW-0175">Coiled coil</keyword>
<keyword id="KW-0963">Cytoplasm</keyword>
<keyword id="KW-0206">Cytoskeleton</keyword>
<keyword id="KW-0493">Microtubule</keyword>
<keyword id="KW-0498">Mitosis</keyword>
<keyword id="KW-0539">Nucleus</keyword>
<keyword id="KW-1185">Reference proteome</keyword>
<protein>
    <recommendedName>
        <fullName>Protein STU1</fullName>
    </recommendedName>
</protein>
<evidence type="ECO:0000250" key="1"/>
<evidence type="ECO:0000256" key="2">
    <source>
        <dbReference type="SAM" id="MobiDB-lite"/>
    </source>
</evidence>
<evidence type="ECO:0000305" key="3"/>
<reference key="1">
    <citation type="journal article" date="2006" name="Nature">
        <title>Insights from the genome of the biotrophic fungal plant pathogen Ustilago maydis.</title>
        <authorList>
            <person name="Kaemper J."/>
            <person name="Kahmann R."/>
            <person name="Boelker M."/>
            <person name="Ma L.-J."/>
            <person name="Brefort T."/>
            <person name="Saville B.J."/>
            <person name="Banuett F."/>
            <person name="Kronstad J.W."/>
            <person name="Gold S.E."/>
            <person name="Mueller O."/>
            <person name="Perlin M.H."/>
            <person name="Woesten H.A.B."/>
            <person name="de Vries R."/>
            <person name="Ruiz-Herrera J."/>
            <person name="Reynaga-Pena C.G."/>
            <person name="Snetselaar K."/>
            <person name="McCann M."/>
            <person name="Perez-Martin J."/>
            <person name="Feldbruegge M."/>
            <person name="Basse C.W."/>
            <person name="Steinberg G."/>
            <person name="Ibeas J.I."/>
            <person name="Holloman W."/>
            <person name="Guzman P."/>
            <person name="Farman M.L."/>
            <person name="Stajich J.E."/>
            <person name="Sentandreu R."/>
            <person name="Gonzalez-Prieto J.M."/>
            <person name="Kennell J.C."/>
            <person name="Molina L."/>
            <person name="Schirawski J."/>
            <person name="Mendoza-Mendoza A."/>
            <person name="Greilinger D."/>
            <person name="Muench K."/>
            <person name="Roessel N."/>
            <person name="Scherer M."/>
            <person name="Vranes M."/>
            <person name="Ladendorf O."/>
            <person name="Vincon V."/>
            <person name="Fuchs U."/>
            <person name="Sandrock B."/>
            <person name="Meng S."/>
            <person name="Ho E.C.H."/>
            <person name="Cahill M.J."/>
            <person name="Boyce K.J."/>
            <person name="Klose J."/>
            <person name="Klosterman S.J."/>
            <person name="Deelstra H.J."/>
            <person name="Ortiz-Castellanos L."/>
            <person name="Li W."/>
            <person name="Sanchez-Alonso P."/>
            <person name="Schreier P.H."/>
            <person name="Haeuser-Hahn I."/>
            <person name="Vaupel M."/>
            <person name="Koopmann E."/>
            <person name="Friedrich G."/>
            <person name="Voss H."/>
            <person name="Schlueter T."/>
            <person name="Margolis J."/>
            <person name="Platt D."/>
            <person name="Swimmer C."/>
            <person name="Gnirke A."/>
            <person name="Chen F."/>
            <person name="Vysotskaia V."/>
            <person name="Mannhaupt G."/>
            <person name="Gueldener U."/>
            <person name="Muensterkoetter M."/>
            <person name="Haase D."/>
            <person name="Oesterheld M."/>
            <person name="Mewes H.-W."/>
            <person name="Mauceli E.W."/>
            <person name="DeCaprio D."/>
            <person name="Wade C.M."/>
            <person name="Butler J."/>
            <person name="Young S.K."/>
            <person name="Jaffe D.B."/>
            <person name="Calvo S.E."/>
            <person name="Nusbaum C."/>
            <person name="Galagan J.E."/>
            <person name="Birren B.W."/>
        </authorList>
    </citation>
    <scope>NUCLEOTIDE SEQUENCE [LARGE SCALE GENOMIC DNA]</scope>
    <source>
        <strain>DSM 14603 / FGSC 9021 / UM521</strain>
    </source>
</reference>
<reference key="2">
    <citation type="submission" date="2014-09" db="EMBL/GenBank/DDBJ databases">
        <authorList>
            <person name="Gueldener U."/>
            <person name="Muensterkoetter M."/>
            <person name="Walter M.C."/>
            <person name="Mannhaupt G."/>
            <person name="Kahmann R."/>
        </authorList>
    </citation>
    <scope>GENOME REANNOTATION</scope>
    <source>
        <strain>DSM 14603 / FGSC 9021 / UM521</strain>
    </source>
</reference>
<dbReference type="EMBL" id="CM003152">
    <property type="protein sequence ID" value="KIS67447.1"/>
    <property type="molecule type" value="Genomic_DNA"/>
</dbReference>
<dbReference type="RefSeq" id="XP_011391000.1">
    <property type="nucleotide sequence ID" value="XM_011392698.1"/>
</dbReference>
<dbReference type="STRING" id="237631.Q4P5R8"/>
<dbReference type="EnsemblFungi" id="KIS67447">
    <property type="protein sequence ID" value="KIS67447"/>
    <property type="gene ID" value="UMAG_11759"/>
</dbReference>
<dbReference type="GeneID" id="23567608"/>
<dbReference type="KEGG" id="uma:UMAG_11759"/>
<dbReference type="VEuPathDB" id="FungiDB:UMAG_11759"/>
<dbReference type="eggNOG" id="ENOG502QT5T">
    <property type="taxonomic scope" value="Eukaryota"/>
</dbReference>
<dbReference type="HOGENOM" id="CLU_259371_0_0_1"/>
<dbReference type="InParanoid" id="Q4P5R8"/>
<dbReference type="OrthoDB" id="46159at2759"/>
<dbReference type="Proteomes" id="UP000000561">
    <property type="component" value="Chromosome 13"/>
</dbReference>
<dbReference type="GO" id="GO:0005881">
    <property type="term" value="C:cytoplasmic microtubule"/>
    <property type="evidence" value="ECO:0000318"/>
    <property type="project" value="GO_Central"/>
</dbReference>
<dbReference type="GO" id="GO:0005815">
    <property type="term" value="C:microtubule organizing center"/>
    <property type="evidence" value="ECO:0000318"/>
    <property type="project" value="GO_Central"/>
</dbReference>
<dbReference type="GO" id="GO:0072686">
    <property type="term" value="C:mitotic spindle"/>
    <property type="evidence" value="ECO:0000318"/>
    <property type="project" value="GO_Central"/>
</dbReference>
<dbReference type="GO" id="GO:1990023">
    <property type="term" value="C:mitotic spindle midzone"/>
    <property type="evidence" value="ECO:0000318"/>
    <property type="project" value="GO_Central"/>
</dbReference>
<dbReference type="GO" id="GO:0005634">
    <property type="term" value="C:nucleus"/>
    <property type="evidence" value="ECO:0007669"/>
    <property type="project" value="UniProtKB-SubCell"/>
</dbReference>
<dbReference type="GO" id="GO:0005876">
    <property type="term" value="C:spindle microtubule"/>
    <property type="evidence" value="ECO:0000318"/>
    <property type="project" value="GO_Central"/>
</dbReference>
<dbReference type="GO" id="GO:0008017">
    <property type="term" value="F:microtubule binding"/>
    <property type="evidence" value="ECO:0000318"/>
    <property type="project" value="GO_Central"/>
</dbReference>
<dbReference type="GO" id="GO:0051301">
    <property type="term" value="P:cell division"/>
    <property type="evidence" value="ECO:0007669"/>
    <property type="project" value="UniProtKB-KW"/>
</dbReference>
<dbReference type="GO" id="GO:0090307">
    <property type="term" value="P:mitotic spindle assembly"/>
    <property type="evidence" value="ECO:0000318"/>
    <property type="project" value="GO_Central"/>
</dbReference>
<dbReference type="Gene3D" id="1.25.10.10">
    <property type="entry name" value="Leucine-rich Repeat Variant"/>
    <property type="match status" value="2"/>
</dbReference>
<dbReference type="InterPro" id="IPR011989">
    <property type="entry name" value="ARM-like"/>
</dbReference>
<dbReference type="InterPro" id="IPR016024">
    <property type="entry name" value="ARM-type_fold"/>
</dbReference>
<dbReference type="InterPro" id="IPR024395">
    <property type="entry name" value="CLASP_N_dom"/>
</dbReference>
<dbReference type="InterPro" id="IPR034085">
    <property type="entry name" value="TOG"/>
</dbReference>
<dbReference type="PANTHER" id="PTHR21567">
    <property type="entry name" value="CLASP"/>
    <property type="match status" value="1"/>
</dbReference>
<dbReference type="PANTHER" id="PTHR21567:SF9">
    <property type="entry name" value="CLIP-ASSOCIATING PROTEIN"/>
    <property type="match status" value="1"/>
</dbReference>
<dbReference type="Pfam" id="PF12348">
    <property type="entry name" value="CLASP_N"/>
    <property type="match status" value="1"/>
</dbReference>
<dbReference type="SMART" id="SM01349">
    <property type="entry name" value="TOG"/>
    <property type="match status" value="2"/>
</dbReference>
<dbReference type="SUPFAM" id="SSF48371">
    <property type="entry name" value="ARM repeat"/>
    <property type="match status" value="1"/>
</dbReference>
<sequence>MADPDAIYELAQRIESNIEVDKRVAALHSLQSLLESAGHVVEADAVTSAVKVALRHANQALSTASLSFIPTYASMIYSGDATDSHSLLNHNVRMLVNSVGLLVIDKLGDQKERIREAARTALIELGNAAYAISSGHLTTSGKGKETETPLGIFERTLREAGLAAKFARVREQSVLLLPILRQSCEKYPIRPLLSTTVELLLDADATVREGARSTLITLFSSATPAAKADLKKELEKRAVRKQTADAILREVLGAPSAATSAPVLSPPAPTTFAPTTRSQFNSSHGADASIPTSYMKSAPAAGTTFPSMPSASATAAADGIRPVYIASRSDLERTFTTMMPFFENKESEHNWLNREQSMIKIRGLLVSGAHRQFGETLFVAQLKAVQEGILKCISSLRTTLSMHAIHLVQELAMELGDDLAPCVEAFLIHLVGMAGFTKKLIANATQEAAAAIMVNVSFRPLYLQLIWQAFQEKNVATRTAAAEHLCTVLNTHAAHRKHAVESHGGLDLLEKCMRKGVGDSNPAARTKSREAFWIFHRHWAAQANALLNSLDPAIRKQVAALAPSDVETDTIVEQQPKADGGPVRVRPGGASMALIQAKKAAALKAAQERDRKKAEDAAAAHEARVAAARAALAEQQQQQQQVQKHLEQQASVEDFVTPVAANNKKGTGFMPIKNRSLHHPGGQGAGAANLKPATELTVVISPTAHQRIQTAISVPLPTSPTPAVTPNARIKSKNLSQTSWETPPHPRSPGLSPVSARSRAISSSSYSSQGSSSSARMQGAASTPRSNRAPPVTHSTLKADLENLSIDGIDGIDDGEVTADATQQARFATSSRDNGTGEDDTLQMNAPEDASMDLMGMDFNSPFKMPASGGRAVKTQSVLLERQNALDALQQTPQPKSHRTISTSSTSSTNSSTTPASASVRRSGLPRPVSTMHSPSPSASASHISAGHIHAPTTSHRVLSSTPSRRAPTNGVSTALENRAKRLDAQASTASASPAKAKPEVWTWIQALMDGTADLRTFRRLARLSSEFGISATKAADERTEQDDEMVLERGPFSNVAWATKSDGAFSSGLQAWLEGGLFGKLFDGLKRYLCVGDGGGSGELQMSAQVVLLRLVENQFSLFGATDREGELLDVVLQSITLLCGTRTSCVASSSIVAGRAALQGFESILGAWSGRCDPVLGFDALLSRSLSDASTVAVLRSGFTPLLVRLPAQLVLEDFLPRLAPLLTSTLHHASPEKRLTAVTVLRHLNDMVRIDAQDSHTRIFDALGLTIRDDDDQAELKSKRALLDVLMYYFSKN</sequence>
<name>STU1_MYCMD</name>
<comment type="function">
    <text evidence="1">Microtubule binding protein that promotes the stabilization of dynamic microtubules. Required for mitotic spindle formation (By similarity).</text>
</comment>
<comment type="subunit">
    <text evidence="1">Interacts with microtubules.</text>
</comment>
<comment type="subcellular location">
    <subcellularLocation>
        <location evidence="1">Cytoplasm</location>
        <location evidence="1">Cytoskeleton</location>
    </subcellularLocation>
    <subcellularLocation>
        <location evidence="1">Nucleus</location>
    </subcellularLocation>
    <subcellularLocation>
        <location evidence="1">Cytoplasm</location>
        <location evidence="1">Cytoskeleton</location>
        <location evidence="1">Spindle</location>
    </subcellularLocation>
</comment>
<comment type="similarity">
    <text evidence="3">Belongs to the CLASP family.</text>
</comment>
<accession>Q4P5R8</accession>
<accession>A0A0D1C0L7</accession>